<proteinExistence type="inferred from homology"/>
<name>RIMP_MYCMM</name>
<accession>B2HKR9</accession>
<keyword id="KW-0963">Cytoplasm</keyword>
<keyword id="KW-1185">Reference proteome</keyword>
<keyword id="KW-0690">Ribosome biogenesis</keyword>
<reference key="1">
    <citation type="journal article" date="2008" name="Genome Res.">
        <title>Insights from the complete genome sequence of Mycobacterium marinum on the evolution of Mycobacterium tuberculosis.</title>
        <authorList>
            <person name="Stinear T.P."/>
            <person name="Seemann T."/>
            <person name="Harrison P.F."/>
            <person name="Jenkin G.A."/>
            <person name="Davies J.K."/>
            <person name="Johnson P.D."/>
            <person name="Abdellah Z."/>
            <person name="Arrowsmith C."/>
            <person name="Chillingworth T."/>
            <person name="Churcher C."/>
            <person name="Clarke K."/>
            <person name="Cronin A."/>
            <person name="Davis P."/>
            <person name="Goodhead I."/>
            <person name="Holroyd N."/>
            <person name="Jagels K."/>
            <person name="Lord A."/>
            <person name="Moule S."/>
            <person name="Mungall K."/>
            <person name="Norbertczak H."/>
            <person name="Quail M.A."/>
            <person name="Rabbinowitsch E."/>
            <person name="Walker D."/>
            <person name="White B."/>
            <person name="Whitehead S."/>
            <person name="Small P.L."/>
            <person name="Brosch R."/>
            <person name="Ramakrishnan L."/>
            <person name="Fischbach M.A."/>
            <person name="Parkhill J."/>
            <person name="Cole S.T."/>
        </authorList>
    </citation>
    <scope>NUCLEOTIDE SEQUENCE [LARGE SCALE GENOMIC DNA]</scope>
    <source>
        <strain>ATCC BAA-535 / M</strain>
    </source>
</reference>
<feature type="chain" id="PRO_1000136780" description="Ribosome maturation factor RimP">
    <location>
        <begin position="1"/>
        <end position="177"/>
    </location>
</feature>
<gene>
    <name evidence="1" type="primary">rimP</name>
    <name type="ordered locus">MMAR_1891</name>
</gene>
<protein>
    <recommendedName>
        <fullName evidence="1">Ribosome maturation factor RimP</fullName>
    </recommendedName>
</protein>
<evidence type="ECO:0000255" key="1">
    <source>
        <dbReference type="HAMAP-Rule" id="MF_01077"/>
    </source>
</evidence>
<dbReference type="EMBL" id="CP000854">
    <property type="protein sequence ID" value="ACC40340.1"/>
    <property type="molecule type" value="Genomic_DNA"/>
</dbReference>
<dbReference type="RefSeq" id="WP_012393687.1">
    <property type="nucleotide sequence ID" value="NC_010612.1"/>
</dbReference>
<dbReference type="SMR" id="B2HKR9"/>
<dbReference type="STRING" id="216594.MMAR_1891"/>
<dbReference type="KEGG" id="mmi:MMAR_1891"/>
<dbReference type="eggNOG" id="COG0779">
    <property type="taxonomic scope" value="Bacteria"/>
</dbReference>
<dbReference type="HOGENOM" id="CLU_070525_3_0_11"/>
<dbReference type="OrthoDB" id="9805006at2"/>
<dbReference type="Proteomes" id="UP000001190">
    <property type="component" value="Chromosome"/>
</dbReference>
<dbReference type="GO" id="GO:0005829">
    <property type="term" value="C:cytosol"/>
    <property type="evidence" value="ECO:0007669"/>
    <property type="project" value="TreeGrafter"/>
</dbReference>
<dbReference type="GO" id="GO:0000028">
    <property type="term" value="P:ribosomal small subunit assembly"/>
    <property type="evidence" value="ECO:0007669"/>
    <property type="project" value="TreeGrafter"/>
</dbReference>
<dbReference type="GO" id="GO:0006412">
    <property type="term" value="P:translation"/>
    <property type="evidence" value="ECO:0007669"/>
    <property type="project" value="TreeGrafter"/>
</dbReference>
<dbReference type="CDD" id="cd01734">
    <property type="entry name" value="YlxS_C"/>
    <property type="match status" value="1"/>
</dbReference>
<dbReference type="Gene3D" id="3.30.300.70">
    <property type="entry name" value="RimP-like superfamily, N-terminal"/>
    <property type="match status" value="1"/>
</dbReference>
<dbReference type="HAMAP" id="MF_01077">
    <property type="entry name" value="RimP"/>
    <property type="match status" value="1"/>
</dbReference>
<dbReference type="InterPro" id="IPR003728">
    <property type="entry name" value="Ribosome_maturation_RimP"/>
</dbReference>
<dbReference type="InterPro" id="IPR028998">
    <property type="entry name" value="RimP_C"/>
</dbReference>
<dbReference type="InterPro" id="IPR036847">
    <property type="entry name" value="RimP_C_sf"/>
</dbReference>
<dbReference type="InterPro" id="IPR028989">
    <property type="entry name" value="RimP_N"/>
</dbReference>
<dbReference type="InterPro" id="IPR035956">
    <property type="entry name" value="RimP_N_sf"/>
</dbReference>
<dbReference type="NCBIfam" id="NF000930">
    <property type="entry name" value="PRK00092.2-2"/>
    <property type="match status" value="1"/>
</dbReference>
<dbReference type="PANTHER" id="PTHR33867">
    <property type="entry name" value="RIBOSOME MATURATION FACTOR RIMP"/>
    <property type="match status" value="1"/>
</dbReference>
<dbReference type="PANTHER" id="PTHR33867:SF1">
    <property type="entry name" value="RIBOSOME MATURATION FACTOR RIMP"/>
    <property type="match status" value="1"/>
</dbReference>
<dbReference type="Pfam" id="PF17384">
    <property type="entry name" value="DUF150_C"/>
    <property type="match status" value="1"/>
</dbReference>
<dbReference type="Pfam" id="PF02576">
    <property type="entry name" value="RimP_N"/>
    <property type="match status" value="1"/>
</dbReference>
<dbReference type="SUPFAM" id="SSF74942">
    <property type="entry name" value="YhbC-like, C-terminal domain"/>
    <property type="match status" value="1"/>
</dbReference>
<dbReference type="SUPFAM" id="SSF75420">
    <property type="entry name" value="YhbC-like, N-terminal domain"/>
    <property type="match status" value="1"/>
</dbReference>
<organism>
    <name type="scientific">Mycobacterium marinum (strain ATCC BAA-535 / M)</name>
    <dbReference type="NCBI Taxonomy" id="216594"/>
    <lineage>
        <taxon>Bacteria</taxon>
        <taxon>Bacillati</taxon>
        <taxon>Actinomycetota</taxon>
        <taxon>Actinomycetes</taxon>
        <taxon>Mycobacteriales</taxon>
        <taxon>Mycobacteriaceae</taxon>
        <taxon>Mycobacterium</taxon>
        <taxon>Mycobacterium ulcerans group</taxon>
    </lineage>
</organism>
<comment type="function">
    <text evidence="1">Required for maturation of 30S ribosomal subunits.</text>
</comment>
<comment type="subcellular location">
    <subcellularLocation>
        <location evidence="1">Cytoplasm</location>
    </subcellularLocation>
</comment>
<comment type="similarity">
    <text evidence="1">Belongs to the RimP family.</text>
</comment>
<sequence>MTTGLPSQTQVIELLGGEFARAGYEIEDVVIDHRARPPRITVVADGDTTLDLDTIAVLSRSASSLLDSLDNIGDSYVLEVSSPGIDRPLTSEKHFRRARGRKVELTLADGSQLTGRIGALQSGSLDLVVRAGREWKVREIPLAEVEKAVVQVEFSPPNPAELELATTGRAAGTEVEA</sequence>